<keyword id="KW-0066">ATP synthesis</keyword>
<keyword id="KW-1003">Cell membrane</keyword>
<keyword id="KW-0138">CF(0)</keyword>
<keyword id="KW-0375">Hydrogen ion transport</keyword>
<keyword id="KW-0406">Ion transport</keyword>
<keyword id="KW-0446">Lipid-binding</keyword>
<keyword id="KW-0472">Membrane</keyword>
<keyword id="KW-0812">Transmembrane</keyword>
<keyword id="KW-1133">Transmembrane helix</keyword>
<keyword id="KW-0813">Transport</keyword>
<gene>
    <name evidence="1" type="primary">atpE</name>
    <name type="ordered locus">SaurJH9_2144</name>
</gene>
<evidence type="ECO:0000255" key="1">
    <source>
        <dbReference type="HAMAP-Rule" id="MF_01396"/>
    </source>
</evidence>
<sequence>MNLIAAAIAIGLSALGAGIGNGLIVSRTVEGVARQPEARGQLMGIMFIGVGLVEALPIIGVVIAFMTFAG</sequence>
<name>ATPL_STAA9</name>
<proteinExistence type="inferred from homology"/>
<feature type="chain" id="PRO_1000184497" description="ATP synthase subunit c">
    <location>
        <begin position="1"/>
        <end position="70"/>
    </location>
</feature>
<feature type="transmembrane region" description="Helical" evidence="1">
    <location>
        <begin position="4"/>
        <end position="24"/>
    </location>
</feature>
<feature type="transmembrane region" description="Helical" evidence="1">
    <location>
        <begin position="45"/>
        <end position="65"/>
    </location>
</feature>
<feature type="site" description="Reversibly protonated during proton transport" evidence="1">
    <location>
        <position position="54"/>
    </location>
</feature>
<accession>A5IUQ3</accession>
<reference key="1">
    <citation type="submission" date="2007-05" db="EMBL/GenBank/DDBJ databases">
        <title>Complete sequence of chromosome of Staphylococcus aureus subsp. aureus JH9.</title>
        <authorList>
            <consortium name="US DOE Joint Genome Institute"/>
            <person name="Copeland A."/>
            <person name="Lucas S."/>
            <person name="Lapidus A."/>
            <person name="Barry K."/>
            <person name="Detter J.C."/>
            <person name="Glavina del Rio T."/>
            <person name="Hammon N."/>
            <person name="Israni S."/>
            <person name="Pitluck S."/>
            <person name="Chain P."/>
            <person name="Malfatti S."/>
            <person name="Shin M."/>
            <person name="Vergez L."/>
            <person name="Schmutz J."/>
            <person name="Larimer F."/>
            <person name="Land M."/>
            <person name="Hauser L."/>
            <person name="Kyrpides N."/>
            <person name="Kim E."/>
            <person name="Tomasz A."/>
            <person name="Richardson P."/>
        </authorList>
    </citation>
    <scope>NUCLEOTIDE SEQUENCE [LARGE SCALE GENOMIC DNA]</scope>
    <source>
        <strain>JH9</strain>
    </source>
</reference>
<dbReference type="EMBL" id="CP000703">
    <property type="protein sequence ID" value="ABQ49926.1"/>
    <property type="molecule type" value="Genomic_DNA"/>
</dbReference>
<dbReference type="RefSeq" id="WP_001048816.1">
    <property type="nucleotide sequence ID" value="NC_009487.1"/>
</dbReference>
<dbReference type="SMR" id="A5IUQ3"/>
<dbReference type="GeneID" id="98346415"/>
<dbReference type="KEGG" id="saj:SaurJH9_2144"/>
<dbReference type="HOGENOM" id="CLU_148047_1_1_9"/>
<dbReference type="GO" id="GO:0005886">
    <property type="term" value="C:plasma membrane"/>
    <property type="evidence" value="ECO:0007669"/>
    <property type="project" value="UniProtKB-SubCell"/>
</dbReference>
<dbReference type="GO" id="GO:0045259">
    <property type="term" value="C:proton-transporting ATP synthase complex"/>
    <property type="evidence" value="ECO:0007669"/>
    <property type="project" value="UniProtKB-KW"/>
</dbReference>
<dbReference type="GO" id="GO:0033177">
    <property type="term" value="C:proton-transporting two-sector ATPase complex, proton-transporting domain"/>
    <property type="evidence" value="ECO:0007669"/>
    <property type="project" value="InterPro"/>
</dbReference>
<dbReference type="GO" id="GO:0008289">
    <property type="term" value="F:lipid binding"/>
    <property type="evidence" value="ECO:0007669"/>
    <property type="project" value="UniProtKB-KW"/>
</dbReference>
<dbReference type="GO" id="GO:0046933">
    <property type="term" value="F:proton-transporting ATP synthase activity, rotational mechanism"/>
    <property type="evidence" value="ECO:0007669"/>
    <property type="project" value="UniProtKB-UniRule"/>
</dbReference>
<dbReference type="CDD" id="cd18185">
    <property type="entry name" value="ATP-synt_Fo_c_ATPE"/>
    <property type="match status" value="1"/>
</dbReference>
<dbReference type="FunFam" id="1.20.20.10:FF:000004">
    <property type="entry name" value="ATP synthase subunit c"/>
    <property type="match status" value="1"/>
</dbReference>
<dbReference type="Gene3D" id="1.20.20.10">
    <property type="entry name" value="F1F0 ATP synthase subunit C"/>
    <property type="match status" value="1"/>
</dbReference>
<dbReference type="HAMAP" id="MF_01396">
    <property type="entry name" value="ATP_synth_c_bact"/>
    <property type="match status" value="1"/>
</dbReference>
<dbReference type="InterPro" id="IPR005953">
    <property type="entry name" value="ATP_synth_csu_bac/chlpt"/>
</dbReference>
<dbReference type="InterPro" id="IPR000454">
    <property type="entry name" value="ATP_synth_F0_csu"/>
</dbReference>
<dbReference type="InterPro" id="IPR020537">
    <property type="entry name" value="ATP_synth_F0_csu_DDCD_BS"/>
</dbReference>
<dbReference type="InterPro" id="IPR038662">
    <property type="entry name" value="ATP_synth_F0_csu_sf"/>
</dbReference>
<dbReference type="InterPro" id="IPR002379">
    <property type="entry name" value="ATPase_proteolipid_c-like_dom"/>
</dbReference>
<dbReference type="InterPro" id="IPR035921">
    <property type="entry name" value="F/V-ATP_Csub_sf"/>
</dbReference>
<dbReference type="NCBIfam" id="TIGR01260">
    <property type="entry name" value="ATP_synt_c"/>
    <property type="match status" value="1"/>
</dbReference>
<dbReference type="NCBIfam" id="NF005363">
    <property type="entry name" value="PRK06876.1"/>
    <property type="match status" value="1"/>
</dbReference>
<dbReference type="Pfam" id="PF00137">
    <property type="entry name" value="ATP-synt_C"/>
    <property type="match status" value="1"/>
</dbReference>
<dbReference type="PRINTS" id="PR00124">
    <property type="entry name" value="ATPASEC"/>
</dbReference>
<dbReference type="SUPFAM" id="SSF81333">
    <property type="entry name" value="F1F0 ATP synthase subunit C"/>
    <property type="match status" value="1"/>
</dbReference>
<dbReference type="PROSITE" id="PS00605">
    <property type="entry name" value="ATPASE_C"/>
    <property type="match status" value="1"/>
</dbReference>
<protein>
    <recommendedName>
        <fullName evidence="1">ATP synthase subunit c</fullName>
    </recommendedName>
    <alternativeName>
        <fullName evidence="1">ATP synthase F(0) sector subunit c</fullName>
    </alternativeName>
    <alternativeName>
        <fullName evidence="1">F-type ATPase subunit c</fullName>
        <shortName evidence="1">F-ATPase subunit c</shortName>
    </alternativeName>
    <alternativeName>
        <fullName evidence="1">Lipid-binding protein</fullName>
    </alternativeName>
</protein>
<organism>
    <name type="scientific">Staphylococcus aureus (strain JH9)</name>
    <dbReference type="NCBI Taxonomy" id="359786"/>
    <lineage>
        <taxon>Bacteria</taxon>
        <taxon>Bacillati</taxon>
        <taxon>Bacillota</taxon>
        <taxon>Bacilli</taxon>
        <taxon>Bacillales</taxon>
        <taxon>Staphylococcaceae</taxon>
        <taxon>Staphylococcus</taxon>
    </lineage>
</organism>
<comment type="function">
    <text evidence="1">F(1)F(0) ATP synthase produces ATP from ADP in the presence of a proton or sodium gradient. F-type ATPases consist of two structural domains, F(1) containing the extramembraneous catalytic core and F(0) containing the membrane proton channel, linked together by a central stalk and a peripheral stalk. During catalysis, ATP synthesis in the catalytic domain of F(1) is coupled via a rotary mechanism of the central stalk subunits to proton translocation.</text>
</comment>
<comment type="function">
    <text evidence="1">Key component of the F(0) channel; it plays a direct role in translocation across the membrane. A homomeric c-ring of between 10-14 subunits forms the central stalk rotor element with the F(1) delta and epsilon subunits.</text>
</comment>
<comment type="subunit">
    <text evidence="1">F-type ATPases have 2 components, F(1) - the catalytic core - and F(0) - the membrane proton channel. F(1) has five subunits: alpha(3), beta(3), gamma(1), delta(1), epsilon(1). F(0) has three main subunits: a(1), b(2) and c(10-14). The alpha and beta chains form an alternating ring which encloses part of the gamma chain. F(1) is attached to F(0) by a central stalk formed by the gamma and epsilon chains, while a peripheral stalk is formed by the delta and b chains.</text>
</comment>
<comment type="subcellular location">
    <subcellularLocation>
        <location evidence="1">Cell membrane</location>
        <topology evidence="1">Multi-pass membrane protein</topology>
    </subcellularLocation>
</comment>
<comment type="similarity">
    <text evidence="1">Belongs to the ATPase C chain family.</text>
</comment>